<name>FCK3_FUSPC</name>
<accession>K3VJJ1</accession>
<reference key="1">
    <citation type="journal article" date="2012" name="PLoS Pathog.">
        <title>Comparative pathogenomics reveals horizontally acquired novel virulence genes in fungi infecting cereal hosts.</title>
        <authorList>
            <person name="Gardiner D.M."/>
            <person name="McDonald M.C."/>
            <person name="Covarelli L."/>
            <person name="Solomon P.S."/>
            <person name="Rusu A.G."/>
            <person name="Marshall M."/>
            <person name="Kazan K."/>
            <person name="Chakraborty S."/>
            <person name="McDonald B.A."/>
            <person name="Manners J.M."/>
        </authorList>
    </citation>
    <scope>NUCLEOTIDE SEQUENCE [LARGE SCALE GENOMIC DNA]</scope>
    <source>
        <strain>CS3096</strain>
    </source>
</reference>
<reference key="2">
    <citation type="journal article" date="2018" name="Mol. Plant Pathol.">
        <title>The cereal pathogen Fusarium pseudograminearum produces a new class of active cytokinins during infection.</title>
        <authorList>
            <person name="Soerensen J.L."/>
            <person name="Benfield A.H."/>
            <person name="Wollenberg R.D."/>
            <person name="Westphal K."/>
            <person name="Wimmer R."/>
            <person name="Nielsen M.R."/>
            <person name="Nielsen K.F."/>
            <person name="Carere J."/>
            <person name="Covarelli L."/>
            <person name="Beccari G."/>
            <person name="Powell J."/>
            <person name="Yamashino T."/>
            <person name="Kogler H."/>
            <person name="Sondergaard T.E."/>
            <person name="Gardiner D.M."/>
        </authorList>
    </citation>
    <scope>FUNCTION</scope>
    <scope>DISRUPTION PHENOTYPE</scope>
    <scope>INDUCTION</scope>
    <scope>PATHWAY</scope>
    <source>
        <strain>CS3096</strain>
    </source>
</reference>
<protein>
    <recommendedName>
        <fullName evidence="2">Probable glycosyltransferase FCK3</fullName>
        <ecNumber evidence="4">2.4.1.-</ecNumber>
    </recommendedName>
    <alternativeName>
        <fullName evidence="2">Cytokinin biosynthesis protein 3</fullName>
    </alternativeName>
</protein>
<proteinExistence type="evidence at transcript level"/>
<organism>
    <name type="scientific">Fusarium pseudograminearum (strain CS3096)</name>
    <name type="common">Wheat and barley crown-rot fungus</name>
    <dbReference type="NCBI Taxonomy" id="1028729"/>
    <lineage>
        <taxon>Eukaryota</taxon>
        <taxon>Fungi</taxon>
        <taxon>Dikarya</taxon>
        <taxon>Ascomycota</taxon>
        <taxon>Pezizomycotina</taxon>
        <taxon>Sordariomycetes</taxon>
        <taxon>Hypocreomycetidae</taxon>
        <taxon>Hypocreales</taxon>
        <taxon>Nectriaceae</taxon>
        <taxon>Fusarium</taxon>
    </lineage>
</organism>
<dbReference type="EC" id="2.4.1.-" evidence="4"/>
<dbReference type="EMBL" id="CM003200">
    <property type="protein sequence ID" value="EKJ73453.1"/>
    <property type="molecule type" value="Genomic_DNA"/>
</dbReference>
<dbReference type="RefSeq" id="XP_009257764.1">
    <property type="nucleotide sequence ID" value="XM_009259489.1"/>
</dbReference>
<dbReference type="EnsemblFungi" id="EKJ73453">
    <property type="protein sequence ID" value="EKJ73453"/>
    <property type="gene ID" value="FPSE_06371"/>
</dbReference>
<dbReference type="GeneID" id="20364989"/>
<dbReference type="KEGG" id="fpu:FPSE_06371"/>
<dbReference type="eggNOG" id="ENOG502RHHQ">
    <property type="taxonomic scope" value="Eukaryota"/>
</dbReference>
<dbReference type="HOGENOM" id="CLU_061936_0_0_1"/>
<dbReference type="OrthoDB" id="409543at2759"/>
<dbReference type="Proteomes" id="UP000007978">
    <property type="component" value="Chromosome 3"/>
</dbReference>
<dbReference type="GO" id="GO:0016757">
    <property type="term" value="F:glycosyltransferase activity"/>
    <property type="evidence" value="ECO:0007669"/>
    <property type="project" value="UniProtKB-KW"/>
</dbReference>
<dbReference type="Gene3D" id="3.90.550.20">
    <property type="match status" value="1"/>
</dbReference>
<dbReference type="InterPro" id="IPR008441">
    <property type="entry name" value="AfumC-like_glycosyl_Trfase"/>
</dbReference>
<dbReference type="InterPro" id="IPR029044">
    <property type="entry name" value="Nucleotide-diphossugar_trans"/>
</dbReference>
<dbReference type="Pfam" id="PF05704">
    <property type="entry name" value="Caps_synth"/>
    <property type="match status" value="1"/>
</dbReference>
<dbReference type="SUPFAM" id="SSF53448">
    <property type="entry name" value="Nucleotide-diphospho-sugar transferases"/>
    <property type="match status" value="1"/>
</dbReference>
<feature type="chain" id="PRO_0000442154" description="Probable glycosyltransferase FCK3">
    <location>
        <begin position="1"/>
        <end position="394"/>
    </location>
</feature>
<keyword id="KW-0328">Glycosyltransferase</keyword>
<keyword id="KW-1185">Reference proteome</keyword>
<keyword id="KW-0808">Transferase</keyword>
<sequence>MHFAIPLEYQSELEATEPVDVGTDEEIISSIEQYRPVTSEKNIWAFWDSGILSMPSWCKRNVIGWARICGADWTIRVLDMKPNSPNHVLKFIDRDMLPEAFLSGTMDGHHTGQHSADFIRGPLLHHYGGVSMDVGCLLIRHIDRICWDLLADPDSPYEIAVPVLYDQTIANHFIAARKNNIFIEKWHQLFLHLWNGRTHQQGISDSPLLGFIKDIRYDDATDFHWDWSVPVPQFLEYIAQVLCWQRLCLIRDTGDGFKSSEYWQRNVLCIDSLNEVWGGEKTLGFDGIGPRMYNLLTTRLDADPDSTAYKDAYKLVWRLLTRSSFQKVTRAKNLTYTPHLGTLWDQNEGKDCIPGSFGELLRYGPVHFRQKRENIEQLEASEPRTLIEKGLLEV</sequence>
<evidence type="ECO:0000269" key="1">
    <source>
    </source>
</evidence>
<evidence type="ECO:0000303" key="2">
    <source>
    </source>
</evidence>
<evidence type="ECO:0000305" key="3"/>
<evidence type="ECO:0000305" key="4">
    <source>
    </source>
</evidence>
<comment type="function">
    <text>Probable glycosyl transferase; part of the gene cluster that mediates the biosynthesis of cytokinins such as fusatin, fusatinic acids or 8-oxofusatin, known for their growth promoting and anti-senescence activities toward host plants (PubMed:28802024). FCK1 is a bifunctional enzyme that performs the first steps in the biosynthesis of Fusarium cytokinins (PubMed:28802024). It first condenses adenosine monophosphate (AMP) with dimethylallyl diphosphate (DMAPP) to yield isoprenyl adenosine monophosphate (PubMed:28802024). It then catalyzes the removal of the phosphoribose to produce isopentenylaldehyde (PubMed:28802024). The cytochrome P450 monooxygenase then converts isopentenylaldehyde to trans-zeatin (PubMed:28802024). A condensation step converts trans-zeatin to fusatin which is further modified to produce fusatinic acid (PubMed:28802024). The mechanism for oxidation of fusatin to fusatinic acid remains unknown (PubMed:28802024). 8-oxofusatin could be produced through several pathways, via direct oxygenation of fusatin, or via the 8-oxo-pentenyladenine intermediate which itself must arise from either the prenylation of 8-oxo-AMP by FCK1 and/or oxygenation of isopentenylaldehyde (PubMed:28802024). Both the FCK3 and FCK4 enzymes act downstream of the identified cytokinins to produce yet unidentified compounds (PubMed:28802024).</text>
</comment>
<comment type="pathway">
    <text evidence="1">Secondary metabolite biosynthesis.</text>
</comment>
<comment type="induction">
    <text evidence="1">Expressed during infection of barley and Brachypodium (PubMed:28802024).</text>
</comment>
<comment type="disruption phenotype">
    <text evidence="1">Results in enhanced production of cytokinins, including a compound which could be 8-oxo-trans-zeatin, an obvious intermediate for the parallel biosynthesis of 8-oxo-fusatin (PubMed:28802024).</text>
</comment>
<comment type="similarity">
    <text evidence="3">Belongs to the afumC glycosyltransferase family.</text>
</comment>
<gene>
    <name evidence="2" type="primary">FCK3</name>
    <name type="ORF">FPSE_06371</name>
</gene>